<feature type="chain" id="PRO_1000134464" description="Acetyl-coenzyme A carboxylase carboxyl transferase subunit alpha">
    <location>
        <begin position="1"/>
        <end position="323"/>
    </location>
</feature>
<feature type="domain" description="CoA carboxyltransferase C-terminal" evidence="2">
    <location>
        <begin position="39"/>
        <end position="293"/>
    </location>
</feature>
<evidence type="ECO:0000255" key="1">
    <source>
        <dbReference type="HAMAP-Rule" id="MF_00823"/>
    </source>
</evidence>
<evidence type="ECO:0000255" key="2">
    <source>
        <dbReference type="PROSITE-ProRule" id="PRU01137"/>
    </source>
</evidence>
<reference key="1">
    <citation type="journal article" date="2009" name="J. Bacteriol.">
        <title>The genome of Burkholderia cenocepacia J2315, an epidemic pathogen of cystic fibrosis patients.</title>
        <authorList>
            <person name="Holden M.T."/>
            <person name="Seth-Smith H.M."/>
            <person name="Crossman L.C."/>
            <person name="Sebaihia M."/>
            <person name="Bentley S.D."/>
            <person name="Cerdeno-Tarraga A.M."/>
            <person name="Thomson N.R."/>
            <person name="Bason N."/>
            <person name="Quail M.A."/>
            <person name="Sharp S."/>
            <person name="Cherevach I."/>
            <person name="Churcher C."/>
            <person name="Goodhead I."/>
            <person name="Hauser H."/>
            <person name="Holroyd N."/>
            <person name="Mungall K."/>
            <person name="Scott P."/>
            <person name="Walker D."/>
            <person name="White B."/>
            <person name="Rose H."/>
            <person name="Iversen P."/>
            <person name="Mil-Homens D."/>
            <person name="Rocha E.P."/>
            <person name="Fialho A.M."/>
            <person name="Baldwin A."/>
            <person name="Dowson C."/>
            <person name="Barrell B.G."/>
            <person name="Govan J.R."/>
            <person name="Vandamme P."/>
            <person name="Hart C.A."/>
            <person name="Mahenthiralingam E."/>
            <person name="Parkhill J."/>
        </authorList>
    </citation>
    <scope>NUCLEOTIDE SEQUENCE [LARGE SCALE GENOMIC DNA]</scope>
    <source>
        <strain>ATCC BAA-245 / DSM 16553 / LMG 16656 / NCTC 13227 / J2315 / CF5610</strain>
    </source>
</reference>
<sequence length="323" mass="35611">MKTTFLDFEQPIAELEAKIEELRFVQDDSAVDISEEIERLSKKSQQLTKDLYANLSPWQVSQIARHPQRPYTLDYVAELFTDFHELHGDRAFADDLSIVGGLARFGGHPCMVIGHQKGRDTKERAARNFGMPRPEGYRKAERLMRLAEKFGLPIFTFVDTPGAYPGIGAEERGQSEAIGRNLYVMAELKTPIITTVIGEGGSGGALAIAVADTVMMLQFSTYSVISPEGCASILWKSAAKAPEAAEALGLTAHRLKALGLIDKIINEPLGGAHRDPKGMAALLRRALADSLRQFQGMSIDALRERRFERLMAYGKFKETTPGA</sequence>
<accession>B4ED71</accession>
<organism>
    <name type="scientific">Burkholderia cenocepacia (strain ATCC BAA-245 / DSM 16553 / LMG 16656 / NCTC 13227 / J2315 / CF5610)</name>
    <name type="common">Burkholderia cepacia (strain J2315)</name>
    <dbReference type="NCBI Taxonomy" id="216591"/>
    <lineage>
        <taxon>Bacteria</taxon>
        <taxon>Pseudomonadati</taxon>
        <taxon>Pseudomonadota</taxon>
        <taxon>Betaproteobacteria</taxon>
        <taxon>Burkholderiales</taxon>
        <taxon>Burkholderiaceae</taxon>
        <taxon>Burkholderia</taxon>
        <taxon>Burkholderia cepacia complex</taxon>
    </lineage>
</organism>
<gene>
    <name evidence="1" type="primary">accA</name>
    <name type="ordered locus">BceJ2315_21120</name>
    <name type="ORF">BCAL2148</name>
</gene>
<proteinExistence type="inferred from homology"/>
<protein>
    <recommendedName>
        <fullName evidence="1">Acetyl-coenzyme A carboxylase carboxyl transferase subunit alpha</fullName>
        <shortName evidence="1">ACCase subunit alpha</shortName>
        <shortName evidence="1">Acetyl-CoA carboxylase carboxyltransferase subunit alpha</shortName>
        <ecNumber evidence="1">2.1.3.15</ecNumber>
    </recommendedName>
</protein>
<name>ACCA_BURCJ</name>
<keyword id="KW-0067">ATP-binding</keyword>
<keyword id="KW-0963">Cytoplasm</keyword>
<keyword id="KW-0275">Fatty acid biosynthesis</keyword>
<keyword id="KW-0276">Fatty acid metabolism</keyword>
<keyword id="KW-0444">Lipid biosynthesis</keyword>
<keyword id="KW-0443">Lipid metabolism</keyword>
<keyword id="KW-0547">Nucleotide-binding</keyword>
<keyword id="KW-0808">Transferase</keyword>
<dbReference type="EC" id="2.1.3.15" evidence="1"/>
<dbReference type="EMBL" id="AM747720">
    <property type="protein sequence ID" value="CAR52450.1"/>
    <property type="molecule type" value="Genomic_DNA"/>
</dbReference>
<dbReference type="RefSeq" id="WP_006478433.1">
    <property type="nucleotide sequence ID" value="NC_011000.1"/>
</dbReference>
<dbReference type="SMR" id="B4ED71"/>
<dbReference type="KEGG" id="bcj:BCAL2148"/>
<dbReference type="eggNOG" id="COG0825">
    <property type="taxonomic scope" value="Bacteria"/>
</dbReference>
<dbReference type="HOGENOM" id="CLU_015486_0_2_4"/>
<dbReference type="BioCyc" id="BCEN216591:G1G1V-2360-MONOMER"/>
<dbReference type="UniPathway" id="UPA00655">
    <property type="reaction ID" value="UER00711"/>
</dbReference>
<dbReference type="Proteomes" id="UP000001035">
    <property type="component" value="Chromosome 1"/>
</dbReference>
<dbReference type="GO" id="GO:0009317">
    <property type="term" value="C:acetyl-CoA carboxylase complex"/>
    <property type="evidence" value="ECO:0007669"/>
    <property type="project" value="InterPro"/>
</dbReference>
<dbReference type="GO" id="GO:0003989">
    <property type="term" value="F:acetyl-CoA carboxylase activity"/>
    <property type="evidence" value="ECO:0007669"/>
    <property type="project" value="InterPro"/>
</dbReference>
<dbReference type="GO" id="GO:0005524">
    <property type="term" value="F:ATP binding"/>
    <property type="evidence" value="ECO:0007669"/>
    <property type="project" value="UniProtKB-KW"/>
</dbReference>
<dbReference type="GO" id="GO:0016743">
    <property type="term" value="F:carboxyl- or carbamoyltransferase activity"/>
    <property type="evidence" value="ECO:0007669"/>
    <property type="project" value="UniProtKB-UniRule"/>
</dbReference>
<dbReference type="GO" id="GO:0006633">
    <property type="term" value="P:fatty acid biosynthetic process"/>
    <property type="evidence" value="ECO:0007669"/>
    <property type="project" value="UniProtKB-KW"/>
</dbReference>
<dbReference type="GO" id="GO:2001295">
    <property type="term" value="P:malonyl-CoA biosynthetic process"/>
    <property type="evidence" value="ECO:0007669"/>
    <property type="project" value="UniProtKB-UniRule"/>
</dbReference>
<dbReference type="Gene3D" id="3.90.226.10">
    <property type="entry name" value="2-enoyl-CoA Hydratase, Chain A, domain 1"/>
    <property type="match status" value="1"/>
</dbReference>
<dbReference type="HAMAP" id="MF_00823">
    <property type="entry name" value="AcetylCoA_CT_alpha"/>
    <property type="match status" value="1"/>
</dbReference>
<dbReference type="InterPro" id="IPR001095">
    <property type="entry name" value="Acetyl_CoA_COase_a_su"/>
</dbReference>
<dbReference type="InterPro" id="IPR029045">
    <property type="entry name" value="ClpP/crotonase-like_dom_sf"/>
</dbReference>
<dbReference type="InterPro" id="IPR011763">
    <property type="entry name" value="COA_CT_C"/>
</dbReference>
<dbReference type="NCBIfam" id="TIGR00513">
    <property type="entry name" value="accA"/>
    <property type="match status" value="1"/>
</dbReference>
<dbReference type="NCBIfam" id="NF041504">
    <property type="entry name" value="AccA_sub"/>
    <property type="match status" value="1"/>
</dbReference>
<dbReference type="NCBIfam" id="NF004344">
    <property type="entry name" value="PRK05724.1"/>
    <property type="match status" value="1"/>
</dbReference>
<dbReference type="PANTHER" id="PTHR42853">
    <property type="entry name" value="ACETYL-COENZYME A CARBOXYLASE CARBOXYL TRANSFERASE SUBUNIT ALPHA"/>
    <property type="match status" value="1"/>
</dbReference>
<dbReference type="PANTHER" id="PTHR42853:SF3">
    <property type="entry name" value="ACETYL-COENZYME A CARBOXYLASE CARBOXYL TRANSFERASE SUBUNIT ALPHA, CHLOROPLASTIC"/>
    <property type="match status" value="1"/>
</dbReference>
<dbReference type="Pfam" id="PF03255">
    <property type="entry name" value="ACCA"/>
    <property type="match status" value="1"/>
</dbReference>
<dbReference type="PRINTS" id="PR01069">
    <property type="entry name" value="ACCCTRFRASEA"/>
</dbReference>
<dbReference type="SUPFAM" id="SSF52096">
    <property type="entry name" value="ClpP/crotonase"/>
    <property type="match status" value="1"/>
</dbReference>
<dbReference type="PROSITE" id="PS50989">
    <property type="entry name" value="COA_CT_CTER"/>
    <property type="match status" value="1"/>
</dbReference>
<comment type="function">
    <text evidence="1">Component of the acetyl coenzyme A carboxylase (ACC) complex. First, biotin carboxylase catalyzes the carboxylation of biotin on its carrier protein (BCCP) and then the CO(2) group is transferred by the carboxyltransferase to acetyl-CoA to form malonyl-CoA.</text>
</comment>
<comment type="catalytic activity">
    <reaction evidence="1">
        <text>N(6)-carboxybiotinyl-L-lysyl-[protein] + acetyl-CoA = N(6)-biotinyl-L-lysyl-[protein] + malonyl-CoA</text>
        <dbReference type="Rhea" id="RHEA:54728"/>
        <dbReference type="Rhea" id="RHEA-COMP:10505"/>
        <dbReference type="Rhea" id="RHEA-COMP:10506"/>
        <dbReference type="ChEBI" id="CHEBI:57288"/>
        <dbReference type="ChEBI" id="CHEBI:57384"/>
        <dbReference type="ChEBI" id="CHEBI:83144"/>
        <dbReference type="ChEBI" id="CHEBI:83145"/>
        <dbReference type="EC" id="2.1.3.15"/>
    </reaction>
</comment>
<comment type="pathway">
    <text evidence="1">Lipid metabolism; malonyl-CoA biosynthesis; malonyl-CoA from acetyl-CoA: step 1/1.</text>
</comment>
<comment type="subunit">
    <text evidence="1">Acetyl-CoA carboxylase is a heterohexamer composed of biotin carboxyl carrier protein (AccB), biotin carboxylase (AccC) and two subunits each of ACCase subunit alpha (AccA) and ACCase subunit beta (AccD).</text>
</comment>
<comment type="subcellular location">
    <subcellularLocation>
        <location evidence="1">Cytoplasm</location>
    </subcellularLocation>
</comment>
<comment type="similarity">
    <text evidence="1">Belongs to the AccA family.</text>
</comment>